<dbReference type="EMBL" id="DQ898156">
    <property type="protein sequence ID" value="ABI32421.1"/>
    <property type="molecule type" value="Genomic_DNA"/>
</dbReference>
<dbReference type="RefSeq" id="YP_740114.1">
    <property type="nucleotide sequence ID" value="NC_008325.1"/>
</dbReference>
<dbReference type="SMR" id="Q0G9W5"/>
<dbReference type="GeneID" id="4266730"/>
<dbReference type="OMA" id="VACRIRN"/>
<dbReference type="GO" id="GO:0009535">
    <property type="term" value="C:chloroplast thylakoid membrane"/>
    <property type="evidence" value="ECO:0007669"/>
    <property type="project" value="UniProtKB-SubCell"/>
</dbReference>
<dbReference type="GO" id="GO:0009539">
    <property type="term" value="C:photosystem II reaction center"/>
    <property type="evidence" value="ECO:0007669"/>
    <property type="project" value="InterPro"/>
</dbReference>
<dbReference type="GO" id="GO:0015979">
    <property type="term" value="P:photosynthesis"/>
    <property type="evidence" value="ECO:0007669"/>
    <property type="project" value="UniProtKB-UniRule"/>
</dbReference>
<dbReference type="GO" id="GO:0042549">
    <property type="term" value="P:photosystem II stabilization"/>
    <property type="evidence" value="ECO:0007669"/>
    <property type="project" value="InterPro"/>
</dbReference>
<dbReference type="FunFam" id="1.10.287.740:FF:000001">
    <property type="entry name" value="Photosystem II reaction center protein Z"/>
    <property type="match status" value="1"/>
</dbReference>
<dbReference type="Gene3D" id="1.10.287.740">
    <property type="entry name" value="Photosystem II PsbZ, reaction centre"/>
    <property type="match status" value="1"/>
</dbReference>
<dbReference type="HAMAP" id="MF_00644">
    <property type="entry name" value="PSII_PsbZ"/>
    <property type="match status" value="1"/>
</dbReference>
<dbReference type="InterPro" id="IPR002644">
    <property type="entry name" value="PSII_PsbZ"/>
</dbReference>
<dbReference type="InterPro" id="IPR036512">
    <property type="entry name" value="PSII_PsbZ_sf"/>
</dbReference>
<dbReference type="NCBIfam" id="TIGR03043">
    <property type="entry name" value="PS_II_psbZ"/>
    <property type="match status" value="1"/>
</dbReference>
<dbReference type="PANTHER" id="PTHR34971">
    <property type="entry name" value="PHOTOSYSTEM II REACTION CENTER PROTEIN Z"/>
    <property type="match status" value="1"/>
</dbReference>
<dbReference type="PANTHER" id="PTHR34971:SF2">
    <property type="entry name" value="PHOTOSYSTEM II REACTION CENTER PROTEIN Z"/>
    <property type="match status" value="1"/>
</dbReference>
<dbReference type="Pfam" id="PF01737">
    <property type="entry name" value="Ycf9"/>
    <property type="match status" value="1"/>
</dbReference>
<dbReference type="SUPFAM" id="SSF161055">
    <property type="entry name" value="PsbZ-like"/>
    <property type="match status" value="1"/>
</dbReference>
<feature type="chain" id="PRO_0000277214" description="Photosystem II reaction center protein Z">
    <location>
        <begin position="1"/>
        <end position="62"/>
    </location>
</feature>
<feature type="transmembrane region" description="Helical" evidence="1">
    <location>
        <begin position="8"/>
        <end position="28"/>
    </location>
</feature>
<feature type="transmembrane region" description="Helical" evidence="1">
    <location>
        <begin position="41"/>
        <end position="61"/>
    </location>
</feature>
<keyword id="KW-0150">Chloroplast</keyword>
<keyword id="KW-0472">Membrane</keyword>
<keyword id="KW-0602">Photosynthesis</keyword>
<keyword id="KW-0604">Photosystem II</keyword>
<keyword id="KW-0934">Plastid</keyword>
<keyword id="KW-0674">Reaction center</keyword>
<keyword id="KW-0793">Thylakoid</keyword>
<keyword id="KW-0812">Transmembrane</keyword>
<keyword id="KW-1133">Transmembrane helix</keyword>
<accession>Q0G9W5</accession>
<evidence type="ECO:0000255" key="1">
    <source>
        <dbReference type="HAMAP-Rule" id="MF_00644"/>
    </source>
</evidence>
<comment type="function">
    <text evidence="1">May control the interaction of photosystem II (PSII) cores with the light-harvesting antenna, regulates electron flow through the 2 photosystem reaction centers. PSII is a light-driven water plastoquinone oxidoreductase, using light energy to abstract electrons from H(2)O, generating a proton gradient subsequently used for ATP formation.</text>
</comment>
<comment type="subunit">
    <text evidence="1">PSII is composed of 1 copy each of membrane proteins PsbA, PsbB, PsbC, PsbD, PsbE, PsbF, PsbH, PsbI, PsbJ, PsbK, PsbL, PsbM, PsbT, PsbY, PsbZ, Psb30/Ycf12, at least 3 peripheral proteins of the oxygen-evolving complex and a large number of cofactors. It forms dimeric complexes.</text>
</comment>
<comment type="subcellular location">
    <subcellularLocation>
        <location evidence="1">Plastid</location>
        <location evidence="1">Chloroplast thylakoid membrane</location>
        <topology evidence="1">Multi-pass membrane protein</topology>
    </subcellularLocation>
</comment>
<comment type="similarity">
    <text evidence="1">Belongs to the PsbZ family.</text>
</comment>
<reference key="1">
    <citation type="journal article" date="2006" name="BMC Genomics">
        <title>Complete plastid genome sequence of Daucus carota: implications for biotechnology and phylogeny of angiosperms.</title>
        <authorList>
            <person name="Ruhlman T."/>
            <person name="Lee S.-B."/>
            <person name="Jansen R.K."/>
            <person name="Hostetler J.B."/>
            <person name="Tallon L.J."/>
            <person name="Town C.D."/>
            <person name="Daniell H."/>
        </authorList>
    </citation>
    <scope>NUCLEOTIDE SEQUENCE [LARGE SCALE GENOMIC DNA]</scope>
    <source>
        <strain>cv. Danvers Half-long</strain>
    </source>
</reference>
<protein>
    <recommendedName>
        <fullName evidence="1">Photosystem II reaction center protein Z</fullName>
        <shortName evidence="1">PSII-Z</shortName>
    </recommendedName>
</protein>
<sequence>MTLAFQLAVFALIATSSILLIGVPVVFASPDGWSSNKNVLFSGTSLWIGLVFLVGILNSLIS</sequence>
<gene>
    <name evidence="1" type="primary">psbZ</name>
</gene>
<organism>
    <name type="scientific">Daucus carota</name>
    <name type="common">Wild carrot</name>
    <dbReference type="NCBI Taxonomy" id="4039"/>
    <lineage>
        <taxon>Eukaryota</taxon>
        <taxon>Viridiplantae</taxon>
        <taxon>Streptophyta</taxon>
        <taxon>Embryophyta</taxon>
        <taxon>Tracheophyta</taxon>
        <taxon>Spermatophyta</taxon>
        <taxon>Magnoliopsida</taxon>
        <taxon>eudicotyledons</taxon>
        <taxon>Gunneridae</taxon>
        <taxon>Pentapetalae</taxon>
        <taxon>asterids</taxon>
        <taxon>campanulids</taxon>
        <taxon>Apiales</taxon>
        <taxon>Apiaceae</taxon>
        <taxon>Apioideae</taxon>
        <taxon>Scandiceae</taxon>
        <taxon>Daucinae</taxon>
        <taxon>Daucus</taxon>
        <taxon>Daucus sect. Daucus</taxon>
    </lineage>
</organism>
<geneLocation type="chloroplast"/>
<name>PSBZ_DAUCA</name>
<proteinExistence type="inferred from homology"/>